<protein>
    <recommendedName>
        <fullName>Microtubule-associated protein 1 light chain 3 alpha</fullName>
    </recommendedName>
    <alternativeName>
        <fullName>Autophagy-related protein LC3 A</fullName>
    </alternativeName>
    <alternativeName>
        <fullName>Autophagy-related ubiquitin-like modifier LC3 A</fullName>
    </alternativeName>
    <alternativeName>
        <fullName>MAP1 light chain 3-like protein 1</fullName>
    </alternativeName>
    <alternativeName>
        <fullName>Microtubule-associated proteins 1A/1B light chain 3A</fullName>
        <shortName>MAP1A/MAP1B LC3 A</shortName>
        <shortName>MAP1A/MAP1B light chain 3 A</shortName>
    </alternativeName>
</protein>
<organism>
    <name type="scientific">Homo sapiens</name>
    <name type="common">Human</name>
    <dbReference type="NCBI Taxonomy" id="9606"/>
    <lineage>
        <taxon>Eukaryota</taxon>
        <taxon>Metazoa</taxon>
        <taxon>Chordata</taxon>
        <taxon>Craniata</taxon>
        <taxon>Vertebrata</taxon>
        <taxon>Euteleostomi</taxon>
        <taxon>Mammalia</taxon>
        <taxon>Eutheria</taxon>
        <taxon>Euarchontoglires</taxon>
        <taxon>Primates</taxon>
        <taxon>Haplorrhini</taxon>
        <taxon>Catarrhini</taxon>
        <taxon>Hominidae</taxon>
        <taxon>Homo</taxon>
    </lineage>
</organism>
<feature type="chain" id="PRO_0000017192" description="Microtubule-associated protein 1 light chain 3 alpha">
    <location>
        <begin position="1"/>
        <end position="120"/>
    </location>
</feature>
<feature type="propeptide" id="PRO_0000017193" description="Removed in mature form">
    <location>
        <position position="121"/>
    </location>
</feature>
<feature type="region of interest" description="Important for interaction with ATG13 and for autophagosome formation" evidence="18">
    <location>
        <begin position="49"/>
        <end position="53"/>
    </location>
</feature>
<feature type="site" description="Cleavage; by ATG4B" evidence="34">
    <location>
        <begin position="120"/>
        <end position="121"/>
    </location>
</feature>
<feature type="modified residue" description="Phosphoserine; by PKA" evidence="10">
    <location>
        <position position="12"/>
    </location>
</feature>
<feature type="lipid moiety-binding region" description="Phosphatidylethanolamine amidated glycine; alternate" evidence="29 34">
    <location>
        <position position="120"/>
    </location>
</feature>
<feature type="lipid moiety-binding region" description="Phosphatidylserine amidated glycine; alternate" evidence="29">
    <location>
        <position position="120"/>
    </location>
</feature>
<feature type="splice variant" id="VSP_013660" description="In isoform 2." evidence="33">
    <original>MPSDRPFKQRRSF</original>
    <variation>MKMRFFSSPCGKAAVDP</variation>
    <location>
        <begin position="1"/>
        <end position="13"/>
    </location>
</feature>
<feature type="mutagenesis site" description="Enhances binding to RETREG1." evidence="30">
    <original>H</original>
    <variation>Y</variation>
    <location>
        <position position="27"/>
    </location>
</feature>
<feature type="mutagenesis site" description="Enhances binding to RETREG1." evidence="30">
    <original>K</original>
    <variation>R</variation>
    <location>
        <position position="30"/>
    </location>
</feature>
<feature type="mutagenesis site" description="Increases interaction with ATG13 and strongly reduces autophagosome formation." evidence="18">
    <original>K</original>
    <variation>A</variation>
    <location>
        <position position="49"/>
    </location>
</feature>
<feature type="mutagenesis site" description="Decreases interaction with ATG13 and strongly reduces autophagosome formation." evidence="18">
    <original>K</original>
    <variation>A</variation>
    <location>
        <position position="51"/>
    </location>
</feature>
<feature type="mutagenesis site" description="Decreases interaction with ATG13." evidence="18">
    <original>L</original>
    <variation>A</variation>
    <location>
        <position position="53"/>
    </location>
</feature>
<feature type="mutagenesis site" description="Enhances binding to RETREG1." evidence="30">
    <original>H</original>
    <variation>D</variation>
    <location>
        <position position="57"/>
    </location>
</feature>
<feature type="mutagenesis site" description="Enhances binding to RETREG1." evidence="30">
    <original>K</original>
    <variation>F</variation>
    <location>
        <position position="65"/>
    </location>
</feature>
<feature type="mutagenesis site" description="Abolished deconjugation of phosphatidylethanolamine (PE) by both Legionella RavZ and ATG4B." evidence="27">
    <original>QETF</original>
    <variation>AAAA</variation>
    <location>
        <begin position="116"/>
        <end position="119"/>
    </location>
</feature>
<feature type="mutagenesis site" description="Abolished deconjugation of phosphatidylethanolamine (PE) by both Legionella RavZ and ATG4B." evidence="27">
    <original>QET</original>
    <variation>AAA</variation>
    <location>
        <begin position="116"/>
        <end position="118"/>
    </location>
</feature>
<feature type="mutagenesis site" description="Abolished deconjugation of phosphatidylethanolamine (PE) by ATG4B, without affecting deconjugation by Legionella RavZ." evidence="27">
    <original>QE</original>
    <variation>AA</variation>
    <location>
        <begin position="116"/>
        <end position="117"/>
    </location>
</feature>
<feature type="mutagenesis site" description="Abolished deconjugation of phosphatidylethanolamine (PE) by ATG4B, without affecting deconjugation by Legionella RavZ." evidence="27">
    <original>Q</original>
    <variation>A</variation>
    <location>
        <position position="116"/>
    </location>
</feature>
<feature type="mutagenesis site" description="Abolished deconjugation of phosphatidylethanolamine (PE) by Legionella RavZ, without affecting deconjugation by ATG4B." evidence="27">
    <original>E</original>
    <variation>A</variation>
    <location>
        <position position="117"/>
    </location>
</feature>
<feature type="mutagenesis site" description="Does not affect deconjugation of phosphatidylethanolamine (PE)." evidence="27">
    <original>T</original>
    <variation>A</variation>
    <location>
        <position position="118"/>
    </location>
</feature>
<feature type="mutagenesis site" description="Abolished deconjugation of phosphatidylethanolamine (PE) by both Legionella RavZ and ATG4B." evidence="27">
    <original>F</original>
    <variation>A</variation>
    <location>
        <position position="119"/>
    </location>
</feature>
<feature type="mutagenesis site" description="No processing of precursor." evidence="5">
    <original>G</original>
    <variation>A</variation>
    <location>
        <position position="120"/>
    </location>
</feature>
<feature type="mutagenesis site" description="Abolished deconjugation of phosphatidylethanolamine (PE) by both Legionella RavZ and ATG4B." evidence="27">
    <location>
        <position position="120"/>
    </location>
</feature>
<feature type="helix" evidence="38">
    <location>
        <begin position="2"/>
        <end position="4"/>
    </location>
</feature>
<feature type="helix" evidence="41">
    <location>
        <begin position="7"/>
        <end position="10"/>
    </location>
</feature>
<feature type="helix" evidence="41">
    <location>
        <begin position="13"/>
        <end position="26"/>
    </location>
</feature>
<feature type="strand" evidence="41">
    <location>
        <begin position="30"/>
        <end position="37"/>
    </location>
</feature>
<feature type="strand" evidence="38">
    <location>
        <begin position="42"/>
        <end position="44"/>
    </location>
</feature>
<feature type="strand" evidence="41">
    <location>
        <begin position="50"/>
        <end position="55"/>
    </location>
</feature>
<feature type="helix" evidence="41">
    <location>
        <begin position="60"/>
        <end position="71"/>
    </location>
</feature>
<feature type="strand" evidence="40">
    <location>
        <begin position="75"/>
        <end position="77"/>
    </location>
</feature>
<feature type="strand" evidence="41">
    <location>
        <begin position="80"/>
        <end position="83"/>
    </location>
</feature>
<feature type="turn" evidence="38">
    <location>
        <begin position="84"/>
        <end position="86"/>
    </location>
</feature>
<feature type="strand" evidence="38">
    <location>
        <begin position="91"/>
        <end position="93"/>
    </location>
</feature>
<feature type="helix" evidence="41">
    <location>
        <begin position="95"/>
        <end position="102"/>
    </location>
</feature>
<feature type="strand" evidence="41">
    <location>
        <begin position="109"/>
        <end position="115"/>
    </location>
</feature>
<feature type="helix" evidence="39">
    <location>
        <begin position="116"/>
        <end position="119"/>
    </location>
</feature>
<accession>Q9H492</accession>
<accession>E1P5P4</accession>
<accession>E1P5P5</accession>
<accession>Q9BXW5</accession>
<reference key="1">
    <citation type="journal article" date="2003" name="J. Biol. Chem.">
        <title>Post-translational modifications of three members of the human MAP1LC3 family and detection of a novel type of modification for MAP1LC3B.</title>
        <authorList>
            <person name="He H."/>
            <person name="Dang Y."/>
            <person name="Dai F."/>
            <person name="Guo Z."/>
            <person name="Wu J."/>
            <person name="She X."/>
            <person name="Pei Y."/>
            <person name="Chen Y."/>
            <person name="Ling W."/>
            <person name="Wu C."/>
            <person name="Zhao S."/>
            <person name="Liu J.O."/>
            <person name="Yu L."/>
        </authorList>
    </citation>
    <scope>NUCLEOTIDE SEQUENCE [MRNA] (ISOFORM 1)</scope>
    <scope>SUBCELLULAR LOCATION</scope>
    <scope>TISSUE SPECIFICITY</scope>
    <scope>MUTAGENESIS OF GLY-120</scope>
</reference>
<reference key="2">
    <citation type="submission" date="2003-05" db="EMBL/GenBank/DDBJ databases">
        <title>Cloning of human full-length CDSs in BD Creator(TM) system donor vector.</title>
        <authorList>
            <person name="Kalnine N."/>
            <person name="Chen X."/>
            <person name="Rolfs A."/>
            <person name="Halleck A."/>
            <person name="Hines L."/>
            <person name="Eisenstein S."/>
            <person name="Koundinya M."/>
            <person name="Raphael J."/>
            <person name="Moreira D."/>
            <person name="Kelley T."/>
            <person name="LaBaer J."/>
            <person name="Lin Y."/>
            <person name="Phelan M."/>
            <person name="Farmer A."/>
        </authorList>
    </citation>
    <scope>NUCLEOTIDE SEQUENCE [LARGE SCALE MRNA] (ISOFORM 1)</scope>
</reference>
<reference key="3">
    <citation type="journal article" date="2007" name="BMC Genomics">
        <title>The full-ORF clone resource of the German cDNA consortium.</title>
        <authorList>
            <person name="Bechtel S."/>
            <person name="Rosenfelder H."/>
            <person name="Duda A."/>
            <person name="Schmidt C.P."/>
            <person name="Ernst U."/>
            <person name="Wellenreuther R."/>
            <person name="Mehrle A."/>
            <person name="Schuster C."/>
            <person name="Bahr A."/>
            <person name="Bloecker H."/>
            <person name="Heubner D."/>
            <person name="Hoerlein A."/>
            <person name="Michel G."/>
            <person name="Wedler H."/>
            <person name="Koehrer K."/>
            <person name="Ottenwaelder B."/>
            <person name="Poustka A."/>
            <person name="Wiemann S."/>
            <person name="Schupp I."/>
        </authorList>
    </citation>
    <scope>NUCLEOTIDE SEQUENCE [LARGE SCALE MRNA] (ISOFORM 1)</scope>
    <source>
        <tissue>Amygdala</tissue>
    </source>
</reference>
<reference key="4">
    <citation type="journal article" date="2001" name="Nature">
        <title>The DNA sequence and comparative analysis of human chromosome 20.</title>
        <authorList>
            <person name="Deloukas P."/>
            <person name="Matthews L.H."/>
            <person name="Ashurst J.L."/>
            <person name="Burton J."/>
            <person name="Gilbert J.G.R."/>
            <person name="Jones M."/>
            <person name="Stavrides G."/>
            <person name="Almeida J.P."/>
            <person name="Babbage A.K."/>
            <person name="Bagguley C.L."/>
            <person name="Bailey J."/>
            <person name="Barlow K.F."/>
            <person name="Bates K.N."/>
            <person name="Beard L.M."/>
            <person name="Beare D.M."/>
            <person name="Beasley O.P."/>
            <person name="Bird C.P."/>
            <person name="Blakey S.E."/>
            <person name="Bridgeman A.M."/>
            <person name="Brown A.J."/>
            <person name="Buck D."/>
            <person name="Burrill W.D."/>
            <person name="Butler A.P."/>
            <person name="Carder C."/>
            <person name="Carter N.P."/>
            <person name="Chapman J.C."/>
            <person name="Clamp M."/>
            <person name="Clark G."/>
            <person name="Clark L.N."/>
            <person name="Clark S.Y."/>
            <person name="Clee C.M."/>
            <person name="Clegg S."/>
            <person name="Cobley V.E."/>
            <person name="Collier R.E."/>
            <person name="Connor R.E."/>
            <person name="Corby N.R."/>
            <person name="Coulson A."/>
            <person name="Coville G.J."/>
            <person name="Deadman R."/>
            <person name="Dhami P.D."/>
            <person name="Dunn M."/>
            <person name="Ellington A.G."/>
            <person name="Frankland J.A."/>
            <person name="Fraser A."/>
            <person name="French L."/>
            <person name="Garner P."/>
            <person name="Grafham D.V."/>
            <person name="Griffiths C."/>
            <person name="Griffiths M.N.D."/>
            <person name="Gwilliam R."/>
            <person name="Hall R.E."/>
            <person name="Hammond S."/>
            <person name="Harley J.L."/>
            <person name="Heath P.D."/>
            <person name="Ho S."/>
            <person name="Holden J.L."/>
            <person name="Howden P.J."/>
            <person name="Huckle E."/>
            <person name="Hunt A.R."/>
            <person name="Hunt S.E."/>
            <person name="Jekosch K."/>
            <person name="Johnson C.M."/>
            <person name="Johnson D."/>
            <person name="Kay M.P."/>
            <person name="Kimberley A.M."/>
            <person name="King A."/>
            <person name="Knights A."/>
            <person name="Laird G.K."/>
            <person name="Lawlor S."/>
            <person name="Lehvaeslaiho M.H."/>
            <person name="Leversha M.A."/>
            <person name="Lloyd C."/>
            <person name="Lloyd D.M."/>
            <person name="Lovell J.D."/>
            <person name="Marsh V.L."/>
            <person name="Martin S.L."/>
            <person name="McConnachie L.J."/>
            <person name="McLay K."/>
            <person name="McMurray A.A."/>
            <person name="Milne S.A."/>
            <person name="Mistry D."/>
            <person name="Moore M.J.F."/>
            <person name="Mullikin J.C."/>
            <person name="Nickerson T."/>
            <person name="Oliver K."/>
            <person name="Parker A."/>
            <person name="Patel R."/>
            <person name="Pearce T.A.V."/>
            <person name="Peck A.I."/>
            <person name="Phillimore B.J.C.T."/>
            <person name="Prathalingam S.R."/>
            <person name="Plumb R.W."/>
            <person name="Ramsay H."/>
            <person name="Rice C.M."/>
            <person name="Ross M.T."/>
            <person name="Scott C.E."/>
            <person name="Sehra H.K."/>
            <person name="Shownkeen R."/>
            <person name="Sims S."/>
            <person name="Skuce C.D."/>
            <person name="Smith M.L."/>
            <person name="Soderlund C."/>
            <person name="Steward C.A."/>
            <person name="Sulston J.E."/>
            <person name="Swann R.M."/>
            <person name="Sycamore N."/>
            <person name="Taylor R."/>
            <person name="Tee L."/>
            <person name="Thomas D.W."/>
            <person name="Thorpe A."/>
            <person name="Tracey A."/>
            <person name="Tromans A.C."/>
            <person name="Vaudin M."/>
            <person name="Wall M."/>
            <person name="Wallis J.M."/>
            <person name="Whitehead S.L."/>
            <person name="Whittaker P."/>
            <person name="Willey D.L."/>
            <person name="Williams L."/>
            <person name="Williams S.A."/>
            <person name="Wilming L."/>
            <person name="Wray P.W."/>
            <person name="Hubbard T."/>
            <person name="Durbin R.M."/>
            <person name="Bentley D.R."/>
            <person name="Beck S."/>
            <person name="Rogers J."/>
        </authorList>
    </citation>
    <scope>NUCLEOTIDE SEQUENCE [LARGE SCALE GENOMIC DNA] (ISOFORMS 1 AND 2)</scope>
</reference>
<reference key="5">
    <citation type="submission" date="2005-09" db="EMBL/GenBank/DDBJ databases">
        <authorList>
            <person name="Mural R.J."/>
            <person name="Istrail S."/>
            <person name="Sutton G.G."/>
            <person name="Florea L."/>
            <person name="Halpern A.L."/>
            <person name="Mobarry C.M."/>
            <person name="Lippert R."/>
            <person name="Walenz B."/>
            <person name="Shatkay H."/>
            <person name="Dew I."/>
            <person name="Miller J.R."/>
            <person name="Flanigan M.J."/>
            <person name="Edwards N.J."/>
            <person name="Bolanos R."/>
            <person name="Fasulo D."/>
            <person name="Halldorsson B.V."/>
            <person name="Hannenhalli S."/>
            <person name="Turner R."/>
            <person name="Yooseph S."/>
            <person name="Lu F."/>
            <person name="Nusskern D.R."/>
            <person name="Shue B.C."/>
            <person name="Zheng X.H."/>
            <person name="Zhong F."/>
            <person name="Delcher A.L."/>
            <person name="Huson D.H."/>
            <person name="Kravitz S.A."/>
            <person name="Mouchard L."/>
            <person name="Reinert K."/>
            <person name="Remington K.A."/>
            <person name="Clark A.G."/>
            <person name="Waterman M.S."/>
            <person name="Eichler E.E."/>
            <person name="Adams M.D."/>
            <person name="Hunkapiller M.W."/>
            <person name="Myers E.W."/>
            <person name="Venter J.C."/>
        </authorList>
    </citation>
    <scope>NUCLEOTIDE SEQUENCE [LARGE SCALE GENOMIC DNA]</scope>
</reference>
<reference key="6">
    <citation type="journal article" date="2004" name="Genome Res.">
        <title>The status, quality, and expansion of the NIH full-length cDNA project: the Mammalian Gene Collection (MGC).</title>
        <authorList>
            <consortium name="The MGC Project Team"/>
        </authorList>
    </citation>
    <scope>NUCLEOTIDE SEQUENCE [LARGE SCALE MRNA] (ISOFORM 1)</scope>
    <source>
        <tissue>Uterus</tissue>
    </source>
</reference>
<reference key="7">
    <citation type="journal article" date="2001" name="J. Biol. Chem.">
        <title>The human homolog of Saccharomyces cerevisiae Apg7p is a Protein-activating enzyme for multiple substrates including human Apg12p, GATE-16, GABARAP, and MAP-LC3.</title>
        <authorList>
            <person name="Tanida I."/>
            <person name="Tanida-Miyake E."/>
            <person name="Ueno T."/>
            <person name="Kominami E."/>
        </authorList>
    </citation>
    <scope>INTERACTION WITH ATG7</scope>
</reference>
<reference key="8">
    <citation type="journal article" date="2002" name="J. Biol. Chem.">
        <title>Human Apg3p/Aut1p homologue is an authentic E2 enzyme for multiple substrates, GATE-16, GABARAP, and MAP-LC3, and facilitates the conjugation of hApg12p to hApg5p.</title>
        <authorList>
            <person name="Tanida I."/>
            <person name="Tanida-Miyake E."/>
            <person name="Komatsu M."/>
            <person name="Ueno T."/>
            <person name="Kominami E."/>
        </authorList>
    </citation>
    <scope>INTERACTION WITH ATG3</scope>
</reference>
<reference key="9">
    <citation type="journal article" date="2004" name="J. Biol. Chem.">
        <title>HsAtg4B/HsApg4B/autophagin-1 cleaves the carboxyl termini of three human Atg8 homologues and delipidates microtubule-associated protein light chain 3- and GABAA receptor-associated protein-phospholipid conjugates.</title>
        <authorList>
            <person name="Tanida I."/>
            <person name="Sou Y.-S."/>
            <person name="Ezaki J."/>
            <person name="Minematsu-Ikeguchi N."/>
            <person name="Ueno T."/>
            <person name="Kominami E."/>
        </authorList>
    </citation>
    <scope>LIPIDATION AT GLY-120</scope>
    <scope>CLEAVAGE BY APG4B</scope>
</reference>
<reference key="10">
    <citation type="journal article" date="2007" name="J. Biol. Chem.">
        <title>p62/SQSTM1 binds directly to Atg8/LC3 to facilitate degradation of ubiquitinated protein aggregates by autophagy.</title>
        <authorList>
            <person name="Pankiv S."/>
            <person name="Clausen T.H."/>
            <person name="Lamark T."/>
            <person name="Brech A."/>
            <person name="Bruun J.A."/>
            <person name="Outzen H."/>
            <person name="Overvatn A."/>
            <person name="Bjorkoy G."/>
            <person name="Johansen T."/>
        </authorList>
    </citation>
    <scope>INTERACTION WITH SQSTM1</scope>
    <scope>SUBCELLULAR LOCATION</scope>
</reference>
<reference key="11">
    <citation type="journal article" date="2009" name="Mol. Biol. Cell">
        <title>The TP53INP2 protein is required for autophagy in mammalian cells.</title>
        <authorList>
            <person name="Nowak J."/>
            <person name="Archange C."/>
            <person name="Tardivel-Lacombe J."/>
            <person name="Pontarotti P."/>
            <person name="Pebusque M.J."/>
            <person name="Vaccaro M.I."/>
            <person name="Velasco G."/>
            <person name="Dagorn J.C."/>
            <person name="Iovanna J.L."/>
        </authorList>
    </citation>
    <scope>SUBCELLULAR LOCATION</scope>
    <scope>INTERACTION WITH TP53INP2</scope>
</reference>
<reference key="12">
    <citation type="journal article" date="2010" name="Hum. Mol. Genet.">
        <title>Ubiquilin functions in autophagy and is degraded by chaperone-mediated autophagy.</title>
        <authorList>
            <person name="Rothenberg C."/>
            <person name="Srinivasan D."/>
            <person name="Mah L."/>
            <person name="Kaushik S."/>
            <person name="Peterhoff C.M."/>
            <person name="Ugolino J."/>
            <person name="Fang S."/>
            <person name="Cuervo A.M."/>
            <person name="Nixon R.A."/>
            <person name="Monteiro M.J."/>
        </authorList>
    </citation>
    <scope>IDENTIFICATION IN A COMPLEX WITH UBQLN1 AND UBQLN2</scope>
    <scope>SUBCELLULAR LOCATION</scope>
</reference>
<reference key="13">
    <citation type="journal article" date="2010" name="J. Cell Biol.">
        <title>Regulation of the autophagy protein LC3 by phosphorylation.</title>
        <authorList>
            <person name="Cherra S.J. III"/>
            <person name="Kulich S.M."/>
            <person name="Uechi G."/>
            <person name="Balasubramani M."/>
            <person name="Mountzouris J."/>
            <person name="Day B.W."/>
            <person name="Chu C.T."/>
        </authorList>
    </citation>
    <scope>PHOSPHORYLATION AT SER-12 BY PKA</scope>
    <scope>FUNCTION</scope>
</reference>
<reference key="14">
    <citation type="journal article" date="2012" name="Cell Death Differ.">
        <title>TP53INP1, a tumor suppressor, interacts with LC3 and ATG8-family proteins through the LC3-interacting region (LIR) and promotes autophagy-dependent cell death.</title>
        <authorList>
            <person name="Seillier M."/>
            <person name="Peuget S."/>
            <person name="Gayet O."/>
            <person name="Gauthier C."/>
            <person name="N'guessan P."/>
            <person name="Monte M."/>
            <person name="Carrier A."/>
            <person name="Iovanna J.L."/>
            <person name="Dusetti N.J."/>
        </authorList>
    </citation>
    <scope>SUBCELLULAR LOCATION</scope>
</reference>
<reference key="15">
    <citation type="journal article" date="2012" name="J. Biol. Chem.">
        <title>ATG8 family proteins act as scaffolds for assembly of the ULK complex: sequence requirements for LC3-interacting region (LIR) motifs.</title>
        <authorList>
            <person name="Alemu E.A."/>
            <person name="Lamark T."/>
            <person name="Torgersen K.M."/>
            <person name="Birgisdottir A.B."/>
            <person name="Larsen K.B."/>
            <person name="Jain A."/>
            <person name="Olsvik H."/>
            <person name="Overvatn A."/>
            <person name="Kirkin V."/>
            <person name="Johansen T."/>
        </authorList>
    </citation>
    <scope>INTERACTION WITH ATG13 AND ULK1</scope>
</reference>
<reference key="16">
    <citation type="journal article" date="2012" name="Mol. Cell. Biol.">
        <title>Rab GTPase-activating proteins in autophagy: regulation of endocytic and autophagy pathways by direct binding to human ATG8 modifiers.</title>
        <authorList>
            <person name="Popovic D."/>
            <person name="Akutsu M."/>
            <person name="Novak I."/>
            <person name="Harper J.W."/>
            <person name="Behrends C."/>
            <person name="Dikic I."/>
        </authorList>
    </citation>
    <scope>INTERACTION WITH TBC1D5</scope>
</reference>
<reference key="17">
    <citation type="journal article" date="2012" name="PLoS ONE">
        <title>DOR/Tp53inp2 and Tp53inp1 constitute a metazoan gene family encoding dual regulators of autophagy and transcription.</title>
        <authorList>
            <person name="Sancho A."/>
            <person name="Duran J."/>
            <person name="Garcia-Espana A."/>
            <person name="Mauvezin C."/>
            <person name="Alemu E.A."/>
            <person name="Lamark T."/>
            <person name="Macias M.J."/>
            <person name="Desalle R."/>
            <person name="Royo M."/>
            <person name="Sala D."/>
            <person name="Chicote J.U."/>
            <person name="Palacin M."/>
            <person name="Johansen T."/>
            <person name="Zorzano A."/>
        </authorList>
    </citation>
    <scope>INTERACTION WITH TP53INP1 AND TP53INP2</scope>
</reference>
<reference key="18">
    <citation type="journal article" date="2012" name="Science">
        <title>The Legionella effector RavZ inhibits host autophagy through irreversible Atg8 deconjugation.</title>
        <authorList>
            <person name="Choy A."/>
            <person name="Dancourt J."/>
            <person name="Mugo B."/>
            <person name="O'Connor T.J."/>
            <person name="Isberg R.R."/>
            <person name="Melia T.J."/>
            <person name="Roy C.R."/>
        </authorList>
    </citation>
    <scope>DECONJUGATION BY LEGIONELLA RAVZ (MICROBIAL INFECTION)</scope>
</reference>
<reference key="19">
    <citation type="journal article" date="2013" name="EMBO Rep.">
        <title>Ubiquilin4 is an adaptor protein that recruits Ubiquilin1 to the autophagy machinery.</title>
        <authorList>
            <person name="Lee D.Y."/>
            <person name="Arnott D."/>
            <person name="Brown E.J."/>
        </authorList>
    </citation>
    <scope>INTERACTION WITH UBQLN1 AND UBQLN4</scope>
    <scope>SUBCELLULAR LOCATION</scope>
</reference>
<reference key="20">
    <citation type="journal article" date="2013" name="Proc. Natl. Acad. Sci. U.S.A.">
        <title>Adaptor complex AP2/PICALM, through interaction with LC3, targets Alzheimer's APP-CTF for terminal degradation via autophagy.</title>
        <authorList>
            <person name="Tian Y."/>
            <person name="Chang J.C."/>
            <person name="Fan E.Y."/>
            <person name="Flajolet M."/>
            <person name="Greengard P."/>
        </authorList>
    </citation>
    <scope>INTERACTION WITH PICALM</scope>
</reference>
<reference key="21">
    <citation type="journal article" date="2014" name="Dev. Cell">
        <title>TRIM proteins regulate autophagy and can target autophagic substrates by direct recognition.</title>
        <authorList>
            <person name="Mandell M.A."/>
            <person name="Jain A."/>
            <person name="Arko-Mensah J."/>
            <person name="Chauhan S."/>
            <person name="Kimura T."/>
            <person name="Dinkins C."/>
            <person name="Silvestri G."/>
            <person name="Munch J."/>
            <person name="Kirchhoff F."/>
            <person name="Simonsen A."/>
            <person name="Wei Y."/>
            <person name="Levine B."/>
            <person name="Johansen T."/>
            <person name="Deretic V."/>
        </authorList>
    </citation>
    <scope>INTERACTION WITH TRIM5</scope>
</reference>
<reference key="22">
    <citation type="journal article" date="2015" name="J. Cell Biol.">
        <title>TRIM-mediated precision autophagy targets cytoplasmic regulators of innate immunity.</title>
        <authorList>
            <person name="Kimura T."/>
            <person name="Jain A."/>
            <person name="Choi S.W."/>
            <person name="Mandell M.A."/>
            <person name="Schroder K."/>
            <person name="Johansen T."/>
            <person name="Deretic V."/>
        </authorList>
    </citation>
    <scope>INTERACTION WITH MEFV</scope>
</reference>
<reference key="23">
    <citation type="journal article" date="2018" name="J. Cell Biol.">
        <title>Mechanism of Stx17 recruitment to autophagosomes via IRGM and mammalian Atg8 proteins.</title>
        <authorList>
            <person name="Kumar S."/>
            <person name="Jain A."/>
            <person name="Farzam F."/>
            <person name="Jia J."/>
            <person name="Gu Y."/>
            <person name="Choi S.W."/>
            <person name="Mudd M.H."/>
            <person name="Claude-Taupin A."/>
            <person name="Wester M.J."/>
            <person name="Lidke K.A."/>
            <person name="Rusten T.E."/>
            <person name="Deretic V."/>
        </authorList>
    </citation>
    <scope>INTERACTION WITH IRGM</scope>
</reference>
<reference key="24">
    <citation type="journal article" date="2019" name="Autophagy">
        <title>Redundancy of human ATG4 protease isoforms in autophagy and LC3/GABARAP processing revealed in cells.</title>
        <authorList>
            <person name="Agrotis A."/>
            <person name="Pengo N."/>
            <person name="Burden J.J."/>
            <person name="Ketteler R."/>
        </authorList>
    </citation>
    <scope>PROTEOLYTIC CLEAVAGE</scope>
</reference>
<reference key="25">
    <citation type="journal article" date="2019" name="Mol. Cell">
        <title>Intrinsically disordered protein TEX264 mediates ER-phagy.</title>
        <authorList>
            <person name="Chino H."/>
            <person name="Hatta T."/>
            <person name="Natsume T."/>
            <person name="Mizushima N."/>
        </authorList>
    </citation>
    <scope>INTERACTION WITH TEX264; FUNCTION</scope>
</reference>
<reference key="26">
    <citation type="journal article" date="2019" name="Mol. Cell">
        <title>TEX264 is an endoplasmic reticulum-resident ATG8-interacting protein critical for ER remodeling during nutrient stress.</title>
        <authorList>
            <person name="An H."/>
            <person name="Ordureau A."/>
            <person name="Paulo J.A."/>
            <person name="Shoemaker C.J."/>
            <person name="Denic V."/>
            <person name="Harper J.W."/>
        </authorList>
    </citation>
    <scope>INTERACTION WITH TEX264; FUNCTION</scope>
</reference>
<reference key="27">
    <citation type="journal article" date="2020" name="ChemBioChem">
        <title>Distinct mechanisms for processing autophagy protein LC3-PE by RavZ and ATG4B.</title>
        <authorList>
            <person name="Yang A."/>
            <person name="Pantoom S."/>
            <person name="Wu Y.W."/>
        </authorList>
    </citation>
    <scope>DECONJUGATION BY ATG4B</scope>
    <scope>DECONJUGATION BY LEGIONELLA RAVZ (MICROBIAL INFECTION)</scope>
    <scope>MUTAGENESIS OF 116-GLN--PHE-119; 116-GLN--THR-118; 116-GLN-GLU-117; GLN-116; GLU-117; THR-118; PHE-119 AND GLY-120</scope>
</reference>
<reference key="28">
    <citation type="journal article" date="2019" name="BMB Rep.">
        <title>LIR motifs and the membrane-targeting domain are complementary in the function of RavZ.</title>
        <authorList>
            <person name="Park S.W."/>
            <person name="Jun Y.W."/>
            <person name="Jeon P."/>
            <person name="Lee Y.K."/>
            <person name="Park J.H."/>
            <person name="Lee S.H."/>
            <person name="Lee J.A."/>
            <person name="Jang D.J."/>
        </authorList>
    </citation>
    <scope>DECONJUGATION BY LEGIONELLA RAVZ (MICROBIAL INFECTION)</scope>
</reference>
<reference key="29">
    <citation type="journal article" date="2021" name="Autophagy">
        <title>The BAX-binding protein MOAP1 associates with LC3 and promotes closure of the phagophore.</title>
        <authorList>
            <person name="Chang H.C."/>
            <person name="Tao R.N."/>
            <person name="Tan C.T."/>
            <person name="Wu Y.J."/>
            <person name="Bay B.H."/>
            <person name="Yu V.C."/>
        </authorList>
    </citation>
    <scope>INTERACTION WITH MOAP1</scope>
</reference>
<reference key="30">
    <citation type="journal article" date="2021" name="EMBO Rep.">
        <title>Role of FAM134 paralogues in endoplasmic reticulum remodeling, ER-phagy, and Collagen quality control.</title>
        <authorList>
            <person name="Reggio A."/>
            <person name="Buonomo V."/>
            <person name="Berkane R."/>
            <person name="Bhaskara R.M."/>
            <person name="Tellechea M."/>
            <person name="Peluso I."/>
            <person name="Polishchuk E."/>
            <person name="Di Lorenzo G."/>
            <person name="Cirillo C."/>
            <person name="Esposito M."/>
            <person name="Hussain A."/>
            <person name="Huebner A.K."/>
            <person name="Huebner C.A."/>
            <person name="Settembre C."/>
            <person name="Hummer G."/>
            <person name="Grumati P."/>
            <person name="Stolz A."/>
        </authorList>
    </citation>
    <scope>INTERACTION WITH RETREG1; RETREG2 AND RETREG3</scope>
</reference>
<reference key="31">
    <citation type="journal article" date="2021" name="Mol. Cell">
        <title>Non-canonical autophagy drives alternative ATG8 conjugation to phosphatidylserine.</title>
        <authorList>
            <person name="Durgan J."/>
            <person name="Lystad A.H."/>
            <person name="Sloan K."/>
            <person name="Carlsson S.R."/>
            <person name="Wilson M.I."/>
            <person name="Marcassa E."/>
            <person name="Ulferts R."/>
            <person name="Webster J."/>
            <person name="Lopez-Clavijo A.F."/>
            <person name="Wakelam M.J."/>
            <person name="Beale R."/>
            <person name="Simonsen A."/>
            <person name="Oxley D."/>
            <person name="Florey O."/>
        </authorList>
    </citation>
    <scope>LIPIDATION AT GLY-120</scope>
</reference>
<reference key="32">
    <citation type="journal article" date="2022" name="FEBS Open Bio">
        <title>The crystal structure of the FAM134B-GABARAP complex provides mechanistic insights into the selective binding of FAM134 to the GABARAP subfamily.</title>
        <authorList>
            <person name="Zhao J."/>
            <person name="Li Z."/>
            <person name="Li J."/>
        </authorList>
    </citation>
    <scope>MUTAGENESIS OF HIS-27; LYS-30; HIS-57 AND LYS-65</scope>
</reference>
<reference key="33">
    <citation type="journal article" date="2023" name="Nat. Cell Biol.">
        <title>The Troyer syndrome protein spartin mediates selective autophagy of lipid droplets.</title>
        <authorList>
            <person name="Chung J."/>
            <person name="Park J."/>
            <person name="Lai Z.W."/>
            <person name="Lambert T.J."/>
            <person name="Richards R.C."/>
            <person name="Zhang J."/>
            <person name="Walther T.C."/>
            <person name="Farese R.V. Jr."/>
        </authorList>
    </citation>
    <scope>INTERACTION WITH SPART</scope>
</reference>
<reference key="34">
    <citation type="journal article" date="2023" name="Viruses">
        <title>Characterization of Human Norovirus Nonstructural Protein NS1.2 Involved in the Induction of the Filamentous Endoplasmic Reticulum, Enlarged Lipid Droplets, LC3 Recruitment, and Interaction with NTPase and NS4.</title>
        <authorList>
            <person name="Hung C.H."/>
            <person name="Yen J.B."/>
            <person name="Chang P.J."/>
            <person name="Chen L.W."/>
            <person name="Huang T.Y."/>
            <person name="Tsai W.J."/>
            <person name="Tsai Y.C."/>
        </authorList>
    </citation>
    <scope>INTERACTION WITH HUMAN NOROVIRUS GII.4 NS1-2 (MICROBIAL INFECTION)</scope>
</reference>
<reference evidence="35 36" key="35">
    <citation type="journal article" date="2014" name="Structure">
        <title>Structural basis of the autophagy-related LC3/Atg13 LIR complex: recognition and interaction mechanism.</title>
        <authorList>
            <person name="Suzuki H."/>
            <person name="Tabata K."/>
            <person name="Morita E."/>
            <person name="Kawasaki M."/>
            <person name="Kato R."/>
            <person name="Dobson R.C."/>
            <person name="Yoshimori T."/>
            <person name="Wakatsuki S."/>
        </authorList>
    </citation>
    <scope>X-RAY CRYSTALLOGRAPHY (1.77 ANGSTROMS) OF 2-121</scope>
    <scope>INTERACTION WITH ATG13</scope>
    <scope>MUTAGENESIS OF LYS-49; LYS-51 AND LEU-53</scope>
    <scope>FUNCTION</scope>
</reference>
<reference evidence="37" key="36">
    <citation type="journal article" date="2015" name="Nature">
        <title>Regulation of endoplasmic reticulum turnover by selective autophagy.</title>
        <authorList>
            <person name="Khaminets A."/>
            <person name="Heinrich T."/>
            <person name="Mari M."/>
            <person name="Grumati P."/>
            <person name="Huebner A.K."/>
            <person name="Akutsu M."/>
            <person name="Liebmann L."/>
            <person name="Stolz A."/>
            <person name="Nietzsche S."/>
            <person name="Koch N."/>
            <person name="Mauthe M."/>
            <person name="Katona I."/>
            <person name="Qualmann B."/>
            <person name="Weis J."/>
            <person name="Reggiori F."/>
            <person name="Kurth I."/>
            <person name="Huebner C.A."/>
            <person name="Dikic I."/>
        </authorList>
    </citation>
    <scope>X-RAY CRYSTALLOGRAPHY (1.80 ANGSTROMS) OF 2-120</scope>
    <scope>INTERACTION WITH RETREG1; RETREG2 AND RETREG3</scope>
</reference>
<dbReference type="EMBL" id="AF276658">
    <property type="protein sequence ID" value="AAK35151.1"/>
    <property type="molecule type" value="mRNA"/>
</dbReference>
<dbReference type="EMBL" id="BT007452">
    <property type="protein sequence ID" value="AAP36120.1"/>
    <property type="molecule type" value="mRNA"/>
</dbReference>
<dbReference type="EMBL" id="AL833855">
    <property type="protein sequence ID" value="CAD38714.1"/>
    <property type="molecule type" value="mRNA"/>
</dbReference>
<dbReference type="EMBL" id="AL118520">
    <property type="status" value="NOT_ANNOTATED_CDS"/>
    <property type="molecule type" value="Genomic_DNA"/>
</dbReference>
<dbReference type="EMBL" id="CH471077">
    <property type="protein sequence ID" value="EAW76263.1"/>
    <property type="molecule type" value="Genomic_DNA"/>
</dbReference>
<dbReference type="EMBL" id="CH471077">
    <property type="protein sequence ID" value="EAW76264.1"/>
    <property type="molecule type" value="Genomic_DNA"/>
</dbReference>
<dbReference type="EMBL" id="CH471077">
    <property type="protein sequence ID" value="EAW76265.1"/>
    <property type="molecule type" value="Genomic_DNA"/>
</dbReference>
<dbReference type="EMBL" id="CH471077">
    <property type="protein sequence ID" value="EAW76266.1"/>
    <property type="molecule type" value="Genomic_DNA"/>
</dbReference>
<dbReference type="EMBL" id="BC015810">
    <property type="protein sequence ID" value="AAH15810.1"/>
    <property type="molecule type" value="mRNA"/>
</dbReference>
<dbReference type="CCDS" id="CCDS13237.1">
    <molecule id="Q9H492-2"/>
</dbReference>
<dbReference type="CCDS" id="CCDS13238.1">
    <molecule id="Q9H492-1"/>
</dbReference>
<dbReference type="RefSeq" id="NP_115903.1">
    <molecule id="Q9H492-1"/>
    <property type="nucleotide sequence ID" value="NM_032514.4"/>
</dbReference>
<dbReference type="RefSeq" id="NP_852610.1">
    <molecule id="Q9H492-2"/>
    <property type="nucleotide sequence ID" value="NM_181509.3"/>
</dbReference>
<dbReference type="RefSeq" id="XP_047296514.1">
    <molecule id="Q9H492-1"/>
    <property type="nucleotide sequence ID" value="XM_047440558.1"/>
</dbReference>
<dbReference type="RefSeq" id="XP_047296515.1">
    <molecule id="Q9H492-1"/>
    <property type="nucleotide sequence ID" value="XM_047440559.1"/>
</dbReference>
<dbReference type="RefSeq" id="XP_054180121.1">
    <molecule id="Q9H492-1"/>
    <property type="nucleotide sequence ID" value="XM_054324146.1"/>
</dbReference>
<dbReference type="RefSeq" id="XP_054180122.1">
    <molecule id="Q9H492-1"/>
    <property type="nucleotide sequence ID" value="XM_054324147.1"/>
</dbReference>
<dbReference type="PDB" id="3ECI">
    <property type="method" value="X-ray"/>
    <property type="resolution" value="2.65 A"/>
    <property type="chains" value="A/B=1-121"/>
</dbReference>
<dbReference type="PDB" id="3WAL">
    <property type="method" value="X-ray"/>
    <property type="resolution" value="2.00 A"/>
    <property type="chains" value="A=2-121"/>
</dbReference>
<dbReference type="PDB" id="3WAN">
    <property type="method" value="X-ray"/>
    <property type="resolution" value="1.77 A"/>
    <property type="chains" value="A/B=2-121"/>
</dbReference>
<dbReference type="PDB" id="4ZDV">
    <property type="method" value="X-ray"/>
    <property type="resolution" value="1.80 A"/>
    <property type="chains" value="A=2-120"/>
</dbReference>
<dbReference type="PDB" id="5CX3">
    <property type="method" value="X-ray"/>
    <property type="resolution" value="2.30 A"/>
    <property type="chains" value="A/B/C/D=1-121"/>
</dbReference>
<dbReference type="PDB" id="5DPR">
    <property type="method" value="X-ray"/>
    <property type="resolution" value="2.50 A"/>
    <property type="chains" value="A/B/C/D=2-121"/>
</dbReference>
<dbReference type="PDB" id="6TBE">
    <property type="method" value="X-ray"/>
    <property type="resolution" value="1.67 A"/>
    <property type="chains" value="A=4-119"/>
</dbReference>
<dbReference type="PDB" id="7R9W">
    <property type="method" value="X-ray"/>
    <property type="resolution" value="1.75 A"/>
    <property type="chains" value="A=1-120"/>
</dbReference>
<dbReference type="PDB" id="7R9Z">
    <property type="method" value="X-ray"/>
    <property type="resolution" value="1.72 A"/>
    <property type="chains" value="A=1-120"/>
</dbReference>
<dbReference type="PDB" id="7RA0">
    <property type="method" value="X-ray"/>
    <property type="resolution" value="1.36 A"/>
    <property type="chains" value="A=1-120"/>
</dbReference>
<dbReference type="PDB" id="8T2L">
    <property type="method" value="X-ray"/>
    <property type="resolution" value="2.24 A"/>
    <property type="chains" value="A/B=1-121"/>
</dbReference>
<dbReference type="PDB" id="8T35">
    <property type="method" value="X-ray"/>
    <property type="resolution" value="1.90 A"/>
    <property type="chains" value="A/B=1-121"/>
</dbReference>
<dbReference type="PDB" id="8T36">
    <property type="method" value="X-ray"/>
    <property type="resolution" value="1.85 A"/>
    <property type="chains" value="A=1-121"/>
</dbReference>
<dbReference type="PDB" id="8T4T">
    <property type="method" value="X-ray"/>
    <property type="resolution" value="2.36 A"/>
    <property type="chains" value="A/B=1-121"/>
</dbReference>
<dbReference type="PDBsum" id="3ECI"/>
<dbReference type="PDBsum" id="3WAL"/>
<dbReference type="PDBsum" id="3WAN"/>
<dbReference type="PDBsum" id="4ZDV"/>
<dbReference type="PDBsum" id="5CX3"/>
<dbReference type="PDBsum" id="5DPR"/>
<dbReference type="PDBsum" id="6TBE"/>
<dbReference type="PDBsum" id="7R9W"/>
<dbReference type="PDBsum" id="7R9Z"/>
<dbReference type="PDBsum" id="7RA0"/>
<dbReference type="PDBsum" id="8T2L"/>
<dbReference type="PDBsum" id="8T35"/>
<dbReference type="PDBsum" id="8T36"/>
<dbReference type="PDBsum" id="8T4T"/>
<dbReference type="SMR" id="Q9H492"/>
<dbReference type="BioGRID" id="124137">
    <property type="interactions" value="243"/>
</dbReference>
<dbReference type="CORUM" id="Q9H492"/>
<dbReference type="DIP" id="DIP-49052N"/>
<dbReference type="ELM" id="Q9H492"/>
<dbReference type="FunCoup" id="Q9H492">
    <property type="interactions" value="777"/>
</dbReference>
<dbReference type="IntAct" id="Q9H492">
    <property type="interactions" value="517"/>
</dbReference>
<dbReference type="MINT" id="Q9H492"/>
<dbReference type="STRING" id="9606.ENSP00000363970"/>
<dbReference type="BindingDB" id="Q9H492"/>
<dbReference type="ChEMBL" id="CHEMBL4879518"/>
<dbReference type="DrugCentral" id="Q9H492"/>
<dbReference type="iPTMnet" id="Q9H492"/>
<dbReference type="PhosphoSitePlus" id="Q9H492"/>
<dbReference type="BioMuta" id="MAP1LC3A"/>
<dbReference type="DMDM" id="85701362"/>
<dbReference type="jPOST" id="Q9H492"/>
<dbReference type="MassIVE" id="Q9H492"/>
<dbReference type="PaxDb" id="9606-ENSP00000363970"/>
<dbReference type="PeptideAtlas" id="Q9H492"/>
<dbReference type="ProteomicsDB" id="80798">
    <molecule id="Q9H492-1"/>
</dbReference>
<dbReference type="ProteomicsDB" id="80799">
    <molecule id="Q9H492-2"/>
</dbReference>
<dbReference type="Pumba" id="Q9H492"/>
<dbReference type="Antibodypedia" id="1970">
    <property type="antibodies" value="1369 antibodies from 44 providers"/>
</dbReference>
<dbReference type="DNASU" id="84557"/>
<dbReference type="Ensembl" id="ENST00000360668.8">
    <molecule id="Q9H492-1"/>
    <property type="protein sequence ID" value="ENSP00000353886.3"/>
    <property type="gene ID" value="ENSG00000101460.13"/>
</dbReference>
<dbReference type="Ensembl" id="ENST00000374837.7">
    <molecule id="Q9H492-2"/>
    <property type="protein sequence ID" value="ENSP00000363970.3"/>
    <property type="gene ID" value="ENSG00000101460.13"/>
</dbReference>
<dbReference type="Ensembl" id="ENST00000397709.1">
    <molecule id="Q9H492-1"/>
    <property type="protein sequence ID" value="ENSP00000380821.1"/>
    <property type="gene ID" value="ENSG00000101460.13"/>
</dbReference>
<dbReference type="GeneID" id="84557"/>
<dbReference type="KEGG" id="hsa:84557"/>
<dbReference type="MANE-Select" id="ENST00000360668.8">
    <property type="protein sequence ID" value="ENSP00000353886.3"/>
    <property type="RefSeq nucleotide sequence ID" value="NM_032514.4"/>
    <property type="RefSeq protein sequence ID" value="NP_115903.1"/>
</dbReference>
<dbReference type="UCSC" id="uc002xap.3">
    <molecule id="Q9H492-1"/>
    <property type="organism name" value="human"/>
</dbReference>
<dbReference type="AGR" id="HGNC:6838"/>
<dbReference type="CTD" id="84557"/>
<dbReference type="DisGeNET" id="84557"/>
<dbReference type="GeneCards" id="MAP1LC3A"/>
<dbReference type="HGNC" id="HGNC:6838">
    <property type="gene designation" value="MAP1LC3A"/>
</dbReference>
<dbReference type="HPA" id="ENSG00000101460">
    <property type="expression patterns" value="Low tissue specificity"/>
</dbReference>
<dbReference type="MIM" id="601242">
    <property type="type" value="gene"/>
</dbReference>
<dbReference type="neXtProt" id="NX_Q9H492"/>
<dbReference type="OpenTargets" id="ENSG00000101460"/>
<dbReference type="PharmGKB" id="PA30582"/>
<dbReference type="VEuPathDB" id="HostDB:ENSG00000101460"/>
<dbReference type="eggNOG" id="KOG1654">
    <property type="taxonomic scope" value="Eukaryota"/>
</dbReference>
<dbReference type="GeneTree" id="ENSGT00940000158853"/>
<dbReference type="HOGENOM" id="CLU_119276_1_0_1"/>
<dbReference type="InParanoid" id="Q9H492"/>
<dbReference type="OMA" id="VNERSMV"/>
<dbReference type="OrthoDB" id="6738456at2759"/>
<dbReference type="PAN-GO" id="Q9H492">
    <property type="GO annotations" value="10 GO annotations based on evolutionary models"/>
</dbReference>
<dbReference type="PhylomeDB" id="Q9H492"/>
<dbReference type="TreeFam" id="TF312964"/>
<dbReference type="PathwayCommons" id="Q9H492"/>
<dbReference type="Reactome" id="R-HSA-1632852">
    <property type="pathway name" value="Macroautophagy"/>
</dbReference>
<dbReference type="Reactome" id="R-HSA-5205685">
    <property type="pathway name" value="PINK1-PRKN Mediated Mitophagy"/>
</dbReference>
<dbReference type="Reactome" id="R-HSA-8934903">
    <property type="pathway name" value="Receptor Mediated Mitophagy"/>
</dbReference>
<dbReference type="SignaLink" id="Q9H492"/>
<dbReference type="SIGNOR" id="Q9H492"/>
<dbReference type="BioGRID-ORCS" id="84557">
    <property type="hits" value="30 hits in 1154 CRISPR screens"/>
</dbReference>
<dbReference type="CD-CODE" id="DEE660B4">
    <property type="entry name" value="Stress granule"/>
</dbReference>
<dbReference type="CD-CODE" id="FB4E32DD">
    <property type="entry name" value="Presynaptic clusters and postsynaptic densities"/>
</dbReference>
<dbReference type="ChiTaRS" id="MAP1LC3A">
    <property type="organism name" value="human"/>
</dbReference>
<dbReference type="EvolutionaryTrace" id="Q9H492"/>
<dbReference type="GeneWiki" id="MAP1LC3A"/>
<dbReference type="GenomeRNAi" id="84557"/>
<dbReference type="Pharos" id="Q9H492">
    <property type="development level" value="Tbio"/>
</dbReference>
<dbReference type="PRO" id="PR:Q9H492"/>
<dbReference type="Proteomes" id="UP000005640">
    <property type="component" value="Chromosome 20"/>
</dbReference>
<dbReference type="RNAct" id="Q9H492">
    <property type="molecule type" value="protein"/>
</dbReference>
<dbReference type="Bgee" id="ENSG00000101460">
    <property type="expression patterns" value="Expressed in right hemisphere of cerebellum and 173 other cell types or tissues"/>
</dbReference>
<dbReference type="GO" id="GO:0044754">
    <property type="term" value="C:autolysosome"/>
    <property type="evidence" value="ECO:0000314"/>
    <property type="project" value="MGI"/>
</dbReference>
<dbReference type="GO" id="GO:0005776">
    <property type="term" value="C:autophagosome"/>
    <property type="evidence" value="ECO:0000314"/>
    <property type="project" value="UniProtKB"/>
</dbReference>
<dbReference type="GO" id="GO:0000421">
    <property type="term" value="C:autophagosome membrane"/>
    <property type="evidence" value="ECO:0000318"/>
    <property type="project" value="GO_Central"/>
</dbReference>
<dbReference type="GO" id="GO:0005829">
    <property type="term" value="C:cytosol"/>
    <property type="evidence" value="ECO:0000314"/>
    <property type="project" value="UniProtKB"/>
</dbReference>
<dbReference type="GO" id="GO:0098978">
    <property type="term" value="C:glutamatergic synapse"/>
    <property type="evidence" value="ECO:0007669"/>
    <property type="project" value="Ensembl"/>
</dbReference>
<dbReference type="GO" id="GO:0005770">
    <property type="term" value="C:late endosome"/>
    <property type="evidence" value="ECO:0007669"/>
    <property type="project" value="Ensembl"/>
</dbReference>
<dbReference type="GO" id="GO:0005874">
    <property type="term" value="C:microtubule"/>
    <property type="evidence" value="ECO:0007669"/>
    <property type="project" value="UniProtKB-KW"/>
</dbReference>
<dbReference type="GO" id="GO:0031090">
    <property type="term" value="C:organelle membrane"/>
    <property type="evidence" value="ECO:0000314"/>
    <property type="project" value="UniProtKB"/>
</dbReference>
<dbReference type="GO" id="GO:0008017">
    <property type="term" value="F:microtubule binding"/>
    <property type="evidence" value="ECO:0000318"/>
    <property type="project" value="GO_Central"/>
</dbReference>
<dbReference type="GO" id="GO:0008429">
    <property type="term" value="F:phosphatidylethanolamine binding"/>
    <property type="evidence" value="ECO:0000318"/>
    <property type="project" value="GO_Central"/>
</dbReference>
<dbReference type="GO" id="GO:0005543">
    <property type="term" value="F:phospholipid binding"/>
    <property type="evidence" value="ECO:0000314"/>
    <property type="project" value="UniProtKB"/>
</dbReference>
<dbReference type="GO" id="GO:0031625">
    <property type="term" value="F:ubiquitin protein ligase binding"/>
    <property type="evidence" value="ECO:0000353"/>
    <property type="project" value="UniProtKB"/>
</dbReference>
<dbReference type="GO" id="GO:0000045">
    <property type="term" value="P:autophagosome assembly"/>
    <property type="evidence" value="ECO:0000315"/>
    <property type="project" value="UniProtKB"/>
</dbReference>
<dbReference type="GO" id="GO:0097352">
    <property type="term" value="P:autophagosome maturation"/>
    <property type="evidence" value="ECO:0000314"/>
    <property type="project" value="UniProtKB"/>
</dbReference>
<dbReference type="GO" id="GO:0000422">
    <property type="term" value="P:autophagy of mitochondrion"/>
    <property type="evidence" value="ECO:0000316"/>
    <property type="project" value="MGI"/>
</dbReference>
<dbReference type="GO" id="GO:0034198">
    <property type="term" value="P:cellular response to amino acid starvation"/>
    <property type="evidence" value="ECO:0007669"/>
    <property type="project" value="Ensembl"/>
</dbReference>
<dbReference type="GO" id="GO:0071280">
    <property type="term" value="P:cellular response to copper ion"/>
    <property type="evidence" value="ECO:0007669"/>
    <property type="project" value="Ensembl"/>
</dbReference>
<dbReference type="GO" id="GO:0070301">
    <property type="term" value="P:cellular response to hydrogen peroxide"/>
    <property type="evidence" value="ECO:0007669"/>
    <property type="project" value="Ensembl"/>
</dbReference>
<dbReference type="GO" id="GO:0006995">
    <property type="term" value="P:cellular response to nitrogen starvation"/>
    <property type="evidence" value="ECO:0000318"/>
    <property type="project" value="GO_Central"/>
</dbReference>
<dbReference type="GO" id="GO:0090650">
    <property type="term" value="P:cellular response to oxygen-glucose deprivation"/>
    <property type="evidence" value="ECO:0007669"/>
    <property type="project" value="Ensembl"/>
</dbReference>
<dbReference type="GO" id="GO:0009267">
    <property type="term" value="P:cellular response to starvation"/>
    <property type="evidence" value="ECO:0000314"/>
    <property type="project" value="UniProtKB"/>
</dbReference>
<dbReference type="GO" id="GO:0007254">
    <property type="term" value="P:JNK cascade"/>
    <property type="evidence" value="ECO:0007669"/>
    <property type="project" value="Ensembl"/>
</dbReference>
<dbReference type="GO" id="GO:0016236">
    <property type="term" value="P:macroautophagy"/>
    <property type="evidence" value="ECO:0000314"/>
    <property type="project" value="UniProtKB"/>
</dbReference>
<dbReference type="GO" id="GO:0000423">
    <property type="term" value="P:mitophagy"/>
    <property type="evidence" value="ECO:0000318"/>
    <property type="project" value="GO_Central"/>
</dbReference>
<dbReference type="GO" id="GO:0038066">
    <property type="term" value="P:p38MAPK cascade"/>
    <property type="evidence" value="ECO:0007669"/>
    <property type="project" value="Ensembl"/>
</dbReference>
<dbReference type="GO" id="GO:0010040">
    <property type="term" value="P:response to iron(II) ion"/>
    <property type="evidence" value="ECO:0007669"/>
    <property type="project" value="Ensembl"/>
</dbReference>
<dbReference type="GO" id="GO:0010288">
    <property type="term" value="P:response to lead ion"/>
    <property type="evidence" value="ECO:0007669"/>
    <property type="project" value="Ensembl"/>
</dbReference>
<dbReference type="GO" id="GO:0060395">
    <property type="term" value="P:SMAD protein signal transduction"/>
    <property type="evidence" value="ECO:0007669"/>
    <property type="project" value="Ensembl"/>
</dbReference>
<dbReference type="CDD" id="cd17234">
    <property type="entry name" value="Ubl_ATG8_MAP1LC3A"/>
    <property type="match status" value="1"/>
</dbReference>
<dbReference type="FunFam" id="3.10.20.90:FF:000059">
    <property type="entry name" value="Microtubule-associated proteins 1A/1B light chain 3B"/>
    <property type="match status" value="1"/>
</dbReference>
<dbReference type="Gene3D" id="3.10.20.90">
    <property type="entry name" value="Phosphatidylinositol 3-kinase Catalytic Subunit, Chain A, domain 1"/>
    <property type="match status" value="1"/>
</dbReference>
<dbReference type="InterPro" id="IPR004241">
    <property type="entry name" value="Atg8-like"/>
</dbReference>
<dbReference type="InterPro" id="IPR029071">
    <property type="entry name" value="Ubiquitin-like_domsf"/>
</dbReference>
<dbReference type="PANTHER" id="PTHR10969">
    <property type="entry name" value="MICROTUBULE-ASSOCIATED PROTEINS 1A/1B LIGHT CHAIN 3-RELATED"/>
    <property type="match status" value="1"/>
</dbReference>
<dbReference type="Pfam" id="PF02991">
    <property type="entry name" value="ATG8"/>
    <property type="match status" value="1"/>
</dbReference>
<dbReference type="SUPFAM" id="SSF54236">
    <property type="entry name" value="Ubiquitin-like"/>
    <property type="match status" value="1"/>
</dbReference>
<keyword id="KW-0002">3D-structure</keyword>
<keyword id="KW-0025">Alternative splicing</keyword>
<keyword id="KW-0072">Autophagy</keyword>
<keyword id="KW-0963">Cytoplasm</keyword>
<keyword id="KW-0968">Cytoplasmic vesicle</keyword>
<keyword id="KW-0206">Cytoskeleton</keyword>
<keyword id="KW-0449">Lipoprotein</keyword>
<keyword id="KW-0472">Membrane</keyword>
<keyword id="KW-0493">Microtubule</keyword>
<keyword id="KW-0597">Phosphoprotein</keyword>
<keyword id="KW-1267">Proteomics identification</keyword>
<keyword id="KW-1185">Reference proteome</keyword>
<keyword id="KW-0833">Ubl conjugation pathway</keyword>
<gene>
    <name type="primary">MAP1LC3A</name>
</gene>
<sequence length="121" mass="14272">MPSDRPFKQRRSFADRCKEVQQIRDQHPSKIPVIIERYKGEKQLPVLDKTKFLVPDHVNMSELVKIIRRRLQLNPTQAFFLLVNQHSMVSVSTPIADIYEQEKDEDGFLYMVYASQETFGF</sequence>
<evidence type="ECO:0000250" key="1">
    <source>
        <dbReference type="UniProtKB" id="Q62625"/>
    </source>
</evidence>
<evidence type="ECO:0000250" key="2">
    <source>
        <dbReference type="UniProtKB" id="Q91VR7"/>
    </source>
</evidence>
<evidence type="ECO:0000269" key="3">
    <source>
    </source>
</evidence>
<evidence type="ECO:0000269" key="4">
    <source>
    </source>
</evidence>
<evidence type="ECO:0000269" key="5">
    <source>
    </source>
</evidence>
<evidence type="ECO:0000269" key="6">
    <source>
    </source>
</evidence>
<evidence type="ECO:0000269" key="7">
    <source>
    </source>
</evidence>
<evidence type="ECO:0000269" key="8">
    <source>
    </source>
</evidence>
<evidence type="ECO:0000269" key="9">
    <source>
    </source>
</evidence>
<evidence type="ECO:0000269" key="10">
    <source>
    </source>
</evidence>
<evidence type="ECO:0000269" key="11">
    <source>
    </source>
</evidence>
<evidence type="ECO:0000269" key="12">
    <source>
    </source>
</evidence>
<evidence type="ECO:0000269" key="13">
    <source>
    </source>
</evidence>
<evidence type="ECO:0000269" key="14">
    <source>
    </source>
</evidence>
<evidence type="ECO:0000269" key="15">
    <source>
    </source>
</evidence>
<evidence type="ECO:0000269" key="16">
    <source>
    </source>
</evidence>
<evidence type="ECO:0000269" key="17">
    <source>
    </source>
</evidence>
<evidence type="ECO:0000269" key="18">
    <source>
    </source>
</evidence>
<evidence type="ECO:0000269" key="19">
    <source>
    </source>
</evidence>
<evidence type="ECO:0000269" key="20">
    <source>
    </source>
</evidence>
<evidence type="ECO:0000269" key="21">
    <source>
    </source>
</evidence>
<evidence type="ECO:0000269" key="22">
    <source>
    </source>
</evidence>
<evidence type="ECO:0000269" key="23">
    <source>
    </source>
</evidence>
<evidence type="ECO:0000269" key="24">
    <source>
    </source>
</evidence>
<evidence type="ECO:0000269" key="25">
    <source>
    </source>
</evidence>
<evidence type="ECO:0000269" key="26">
    <source>
    </source>
</evidence>
<evidence type="ECO:0000269" key="27">
    <source>
    </source>
</evidence>
<evidence type="ECO:0000269" key="28">
    <source>
    </source>
</evidence>
<evidence type="ECO:0000269" key="29">
    <source>
    </source>
</evidence>
<evidence type="ECO:0000269" key="30">
    <source>
    </source>
</evidence>
<evidence type="ECO:0000269" key="31">
    <source>
    </source>
</evidence>
<evidence type="ECO:0000269" key="32">
    <source>
    </source>
</evidence>
<evidence type="ECO:0000305" key="33"/>
<evidence type="ECO:0000305" key="34">
    <source>
    </source>
</evidence>
<evidence type="ECO:0007744" key="35">
    <source>
        <dbReference type="PDB" id="3WAL"/>
    </source>
</evidence>
<evidence type="ECO:0007744" key="36">
    <source>
        <dbReference type="PDB" id="3WAN"/>
    </source>
</evidence>
<evidence type="ECO:0007744" key="37">
    <source>
        <dbReference type="PDB" id="4ZDV"/>
    </source>
</evidence>
<evidence type="ECO:0007829" key="38">
    <source>
        <dbReference type="PDB" id="3WAN"/>
    </source>
</evidence>
<evidence type="ECO:0007829" key="39">
    <source>
        <dbReference type="PDB" id="5CX3"/>
    </source>
</evidence>
<evidence type="ECO:0007829" key="40">
    <source>
        <dbReference type="PDB" id="7R9Z"/>
    </source>
</evidence>
<evidence type="ECO:0007829" key="41">
    <source>
        <dbReference type="PDB" id="7RA0"/>
    </source>
</evidence>
<proteinExistence type="evidence at protein level"/>
<comment type="function">
    <text evidence="10 18 24 25">Ubiquitin-like modifier involved in formation of autophagosomal vacuoles (autophagosomes) (PubMed:20713600, PubMed:24290141). While LC3s are involved in elongation of the phagophore membrane, the GABARAP/GATE-16 subfamily is essential for a later stage in autophagosome maturation (PubMed:20713600). Through its interaction with the reticulophagy receptor TEX264, participates in the remodeling of subdomains of the endoplasmic reticulum into autophagosomes upon nutrient stress, which then fuse with lysosomes for endoplasmic reticulum turnover (PubMed:31006537, PubMed:31006538).</text>
</comment>
<comment type="subunit">
    <text evidence="1 3 4 7 8 9 11 13 14 16 17 18 19 20 21 22 24 25 28 32">3 different light chains, LC1 (a cleavage product of MAP1B), LC2 (a cleavage product of MAP1A) and LC3 (produced by one of the MAP1LC3 genes), can associate with the MAP1A or MAP1B heavy chains (By similarity). Interacts with TP53INP1 and TP53INP2 (PubMed:19056683, PubMed:22470510). Directly interacts with SQSTM1; this interaction leads to MAP1LC3A recruitment to inclusion bodies containing polyubiquitinated protein aggregates and to inclusion body degradation by autophagy (PubMed:17580304). Interacts with ATG13 (PubMed:23043107, PubMed:24290141). Interacts with ULK1 (PubMed:23043107). Interacts with TBC1D5 (PubMed:22354992). Found in a complex with UBQLN1 and UBQLN2 (PubMed:20529957). Interacts with UBQLN4 (via STI1 1 and 2 domains). Interacts with UBQLN1 in the presence of UBQLN4 (PubMed:23459205). Interacts with TRIM5 (PubMed:25127057). Interacts with MEFV (PubMed:26347139). Interacts with reticulophagy regulators RETREG1, RETREG2 and RETREG3 (PubMed:26040720, PubMed:34338405). Interacts with PICALM. Interacts with the reticulophagy receptor TEX264 (PubMed:31006537, PubMed:31006538). Interacts with MOAP1 (via LIR motif) (PubMed:33783314). Interacts with IRGM (PubMed:29420192). Interacts with SPART (PubMed:37443287).</text>
</comment>
<comment type="subunit">
    <text evidence="31">(Microbial infection) Interacts with NS1-2 of human norovirus GII.4; this interaction does not seem to be linked to autophagy, but rather plays a role in the formation of viral factories.</text>
</comment>
<comment type="interaction">
    <interactant intactId="EBI-720768">
        <id>Q9H492</id>
    </interactant>
    <interactant intactId="EBI-712014">
        <id>Q9Y4P1</id>
        <label>ATG4B</label>
    </interactant>
    <organismsDiffer>false</organismsDiffer>
    <experiments>6</experiments>
</comment>
<comment type="interaction">
    <interactant intactId="EBI-720768">
        <id>Q9H492</id>
    </interactant>
    <interactant intactId="EBI-3059266">
        <id>Q8IVP5</id>
        <label>FUNDC1</label>
    </interactant>
    <organismsDiffer>false</organismsDiffer>
    <experiments>4</experiments>
</comment>
<comment type="interaction">
    <interactant intactId="EBI-720768">
        <id>Q9H492</id>
    </interactant>
    <interactant intactId="EBI-1055331">
        <id>Q8WZA9</id>
        <label>IRGQ</label>
    </interactant>
    <organismsDiffer>false</organismsDiffer>
    <experiments>4</experiments>
</comment>
<comment type="interaction">
    <interactant intactId="EBI-720768">
        <id>Q9H492</id>
    </interactant>
    <interactant intactId="EBI-356594">
        <id>O14654</id>
        <label>IRS4</label>
    </interactant>
    <organismsDiffer>false</organismsDiffer>
    <experiments>2</experiments>
</comment>
<comment type="interaction">
    <interactant intactId="EBI-720768">
        <id>Q9H492</id>
    </interactant>
    <interactant intactId="EBI-473695">
        <id>Q8WVZ9</id>
        <label>KBTBD7</label>
    </interactant>
    <organismsDiffer>false</organismsDiffer>
    <experiments>2</experiments>
</comment>
<comment type="interaction">
    <interactant intactId="EBI-720768">
        <id>Q9H492</id>
    </interactant>
    <interactant intactId="EBI-298429">
        <id>P04264</id>
        <label>KRT1</label>
    </interactant>
    <organismsDiffer>false</organismsDiffer>
    <experiments>2</experiments>
</comment>
<comment type="interaction">
    <interactant intactId="EBI-720768">
        <id>Q9H492</id>
    </interactant>
    <interactant intactId="EBI-739657">
        <id>Q9BQD3</id>
        <label>KXD1</label>
    </interactant>
    <organismsDiffer>false</organismsDiffer>
    <experiments>6</experiments>
</comment>
<comment type="interaction">
    <interactant intactId="EBI-720768">
        <id>Q9H492</id>
    </interactant>
    <interactant intactId="EBI-742698">
        <id>Q14596</id>
        <label>NBR1</label>
    </interactant>
    <organismsDiffer>false</organismsDiffer>
    <experiments>5</experiments>
</comment>
<comment type="interaction">
    <interactant intactId="EBI-720768">
        <id>Q9H492</id>
    </interactant>
    <interactant intactId="EBI-1044009">
        <id>Q8TD19</id>
        <label>NEK9</label>
    </interactant>
    <organismsDiffer>false</organismsDiffer>
    <experiments>2</experiments>
</comment>
<comment type="interaction">
    <interactant intactId="EBI-720768">
        <id>Q9H492</id>
    </interactant>
    <interactant intactId="EBI-12807478">
        <id>P35372-10</id>
        <label>OPRM1</label>
    </interactant>
    <organismsDiffer>false</organismsDiffer>
    <experiments>3</experiments>
</comment>
<comment type="interaction">
    <interactant intactId="EBI-720768">
        <id>Q9H492</id>
    </interactant>
    <interactant intactId="EBI-10192441">
        <id>Q86VR2</id>
        <label>RETREG3</label>
    </interactant>
    <organismsDiffer>false</organismsDiffer>
    <experiments>9</experiments>
</comment>
<comment type="interaction">
    <interactant intactId="EBI-720768">
        <id>Q9H492</id>
    </interactant>
    <interactant intactId="EBI-307104">
        <id>Q13501</id>
        <label>SQSTM1</label>
    </interactant>
    <organismsDiffer>false</organismsDiffer>
    <experiments>16</experiments>
</comment>
<comment type="interaction">
    <interactant intactId="EBI-720768">
        <id>Q9H492</id>
    </interactant>
    <interactant intactId="EBI-356402">
        <id>Q9UHD2</id>
        <label>TBK1</label>
    </interactant>
    <organismsDiffer>false</organismsDiffer>
    <experiments>2</experiments>
</comment>
<comment type="interaction">
    <interactant intactId="EBI-720768">
        <id>Q9H492</id>
    </interactant>
    <interactant intactId="EBI-357849">
        <id>Q15025</id>
        <label>TNIP1</label>
    </interactant>
    <organismsDiffer>false</organismsDiffer>
    <experiments>7</experiments>
</comment>
<comment type="interaction">
    <interactant intactId="EBI-720768">
        <id>Q9H492</id>
    </interactant>
    <interactant intactId="EBI-74615">
        <id>Q9H0E2</id>
        <label>TOLLIP</label>
    </interactant>
    <organismsDiffer>false</organismsDiffer>
    <experiments>3</experiments>
</comment>
<comment type="interaction">
    <interactant intactId="EBI-720768">
        <id>Q9H492</id>
    </interactant>
    <interactant intactId="EBI-711226">
        <id>Q9NRR5</id>
        <label>UBQLN4</label>
    </interactant>
    <organismsDiffer>false</organismsDiffer>
    <experiments>3</experiments>
</comment>
<comment type="interaction">
    <interactant intactId="EBI-720768">
        <id>Q9H492</id>
    </interactant>
    <interactant intactId="EBI-9031083">
        <id>Q9Y2B5</id>
        <label>VPS9D1</label>
    </interactant>
    <organismsDiffer>false</organismsDiffer>
    <experiments>6</experiments>
</comment>
<comment type="interaction">
    <interactant intactId="EBI-720768">
        <id>Q9H492</id>
    </interactant>
    <interactant intactId="EBI-1774669">
        <id>Q9Z2F7</id>
        <label>Bnip3l</label>
    </interactant>
    <organismsDiffer>true</organismsDiffer>
    <experiments>7</experiments>
</comment>
<comment type="interaction">
    <interactant intactId="EBI-16082793">
        <id>Q9H492-1</id>
    </interactant>
    <interactant intactId="EBI-2798775">
        <id>O75143</id>
        <label>ATG13</label>
    </interactant>
    <organismsDiffer>false</organismsDiffer>
    <experiments>7</experiments>
</comment>
<comment type="interaction">
    <interactant intactId="EBI-16082793">
        <id>Q9H492-1</id>
    </interactant>
    <interactant intactId="EBI-16159046">
        <id>Q9H6L5-1</id>
        <label>RETREG1</label>
    </interactant>
    <organismsDiffer>false</organismsDiffer>
    <experiments>2</experiments>
</comment>
<comment type="subcellular location">
    <subcellularLocation>
        <location evidence="5 6 8 9 12 16">Cytoplasmic vesicle</location>
        <location evidence="5 6 8 9 12 16">Autophagosome membrane</location>
        <topology evidence="6">Lipid-anchor</topology>
    </subcellularLocation>
    <subcellularLocation>
        <location evidence="5">Endomembrane system</location>
        <topology evidence="6">Lipid-anchor</topology>
    </subcellularLocation>
    <subcellularLocation>
        <location evidence="2">Cytoplasm</location>
        <location evidence="2">Cytoskeleton</location>
    </subcellularLocation>
    <text evidence="6">LC3-II binds to the autophagic membranes.</text>
</comment>
<comment type="alternative products">
    <event type="alternative splicing"/>
    <isoform>
        <id>Q9H492-1</id>
        <name>1</name>
        <sequence type="displayed"/>
    </isoform>
    <isoform>
        <id>Q9H492-2</id>
        <name>2</name>
        <sequence type="described" ref="VSP_013660"/>
    </isoform>
</comment>
<comment type="tissue specificity">
    <text evidence="5">Most abundant in heart, brain, liver, skeletal muscle and testis but absent in thymus and peripheral blood leukocytes.</text>
</comment>
<comment type="PTM">
    <text evidence="2 6 23 27 29">The precursor molecule is cleaved by ATG4 (ATG4A, ATG4B, ATG4C or ATG4D) to expose the glycine at the C-terminus and form the cytosolic form, LC3-I (PubMed:15187094, PubMed:30661429). The processed form is then activated by APG7L/ATG7, transferred to ATG3 and conjugated to phosphatidylethanolamine (PE) phospholipid to form the membrane-bound form, LC3-II (PubMed:15187094). During non-canonical autophagy, the processed form is conjugated to phosphatidylserine (PS) phospholipid (PubMed:33909989). ATG4 proteins also mediate the delipidation of PE-conjugated forms (PubMed:32686895, PubMed:33909989). In addition, ATG4B and ATG4D mediate delipidation of ATG8 proteins conjugated to PS during non-canonical autophagy (PubMed:33909989). ATG4B constitutes the major protein for proteolytic activation (PubMed:30661429, PubMed:33909989). ATG4D is the main enzyme for delipidation activity (By similarity).</text>
</comment>
<comment type="PTM">
    <text evidence="15 26 27 29">(Microbial infection) The Legionella effector RavZ is a deconjugating enzyme that hydrolyzes the amide bond between the C-terminal glycine residue and an adjacent aromatic residue in ATG8 proteins conjugated to phosphatidylethanolamine (PE), producing an ATG8 protein that is resistant to reconjugation by the host machinery due to the cleavage of the reactive C-terminal glycine (PubMed:23112293, PubMed:31722778, PubMed:32686895). RavZ is also able to mediate delipidation of ATG8 proteins conjugated to phosphatidylserine (PS) (PubMed:33909989).</text>
</comment>
<comment type="PTM">
    <text evidence="10">Phosphorylation at Ser-12 by PKA inhibits conjugation to phosphatidylethanolamine (PE).</text>
</comment>
<comment type="similarity">
    <text evidence="33">Belongs to the ATG8 family.</text>
</comment>
<name>MLP3A_HUMAN</name>